<sequence>MLPYPQIDPVALAIGPLKIHWYGLMYLIGIGGAWLLASRRLNRFDPTWSREKLSDLVFWLSMGVIVGGRLGYVLFYDLHAYLANPTLIFEVWKGGMSFHGGFIGVMLAALWFGKRNNKSFFELMDFVAPLVPIGLGAGRIGNFINAELWGKPTDVPWAMIFPPFSDPAQLPRHPSQLYQFALEGVALFVILWLFSRKPRPTMAVSGMFALFYGIFRFIVEFVRVPDAQLGYIAWGWLTMGQILCVPMILAGLGLIWWAYNRKPTAKPA</sequence>
<proteinExistence type="inferred from homology"/>
<keyword id="KW-0997">Cell inner membrane</keyword>
<keyword id="KW-1003">Cell membrane</keyword>
<keyword id="KW-0472">Membrane</keyword>
<keyword id="KW-0808">Transferase</keyword>
<keyword id="KW-0812">Transmembrane</keyword>
<keyword id="KW-1133">Transmembrane helix</keyword>
<reference key="1">
    <citation type="submission" date="2008-01" db="EMBL/GenBank/DDBJ databases">
        <title>Complete sequence of Pseudomonas putida GB-1.</title>
        <authorList>
            <consortium name="US DOE Joint Genome Institute"/>
            <person name="Copeland A."/>
            <person name="Lucas S."/>
            <person name="Lapidus A."/>
            <person name="Barry K."/>
            <person name="Glavina del Rio T."/>
            <person name="Dalin E."/>
            <person name="Tice H."/>
            <person name="Pitluck S."/>
            <person name="Bruce D."/>
            <person name="Goodwin L."/>
            <person name="Chertkov O."/>
            <person name="Brettin T."/>
            <person name="Detter J.C."/>
            <person name="Han C."/>
            <person name="Kuske C.R."/>
            <person name="Schmutz J."/>
            <person name="Larimer F."/>
            <person name="Land M."/>
            <person name="Hauser L."/>
            <person name="Kyrpides N."/>
            <person name="Kim E."/>
            <person name="McCarthy J.K."/>
            <person name="Richardson P."/>
        </authorList>
    </citation>
    <scope>NUCLEOTIDE SEQUENCE [LARGE SCALE GENOMIC DNA]</scope>
    <source>
        <strain>GB-1</strain>
    </source>
</reference>
<gene>
    <name evidence="1" type="primary">lgt</name>
    <name type="ordered locus">PputGB1_5195</name>
</gene>
<organism>
    <name type="scientific">Pseudomonas putida (strain GB-1)</name>
    <dbReference type="NCBI Taxonomy" id="76869"/>
    <lineage>
        <taxon>Bacteria</taxon>
        <taxon>Pseudomonadati</taxon>
        <taxon>Pseudomonadota</taxon>
        <taxon>Gammaproteobacteria</taxon>
        <taxon>Pseudomonadales</taxon>
        <taxon>Pseudomonadaceae</taxon>
        <taxon>Pseudomonas</taxon>
    </lineage>
</organism>
<accession>B0KP20</accession>
<comment type="function">
    <text evidence="1">Catalyzes the transfer of the diacylglyceryl group from phosphatidylglycerol to the sulfhydryl group of the N-terminal cysteine of a prolipoprotein, the first step in the formation of mature lipoproteins.</text>
</comment>
<comment type="catalytic activity">
    <reaction evidence="1">
        <text>L-cysteinyl-[prolipoprotein] + a 1,2-diacyl-sn-glycero-3-phospho-(1'-sn-glycerol) = an S-1,2-diacyl-sn-glyceryl-L-cysteinyl-[prolipoprotein] + sn-glycerol 1-phosphate + H(+)</text>
        <dbReference type="Rhea" id="RHEA:56712"/>
        <dbReference type="Rhea" id="RHEA-COMP:14679"/>
        <dbReference type="Rhea" id="RHEA-COMP:14680"/>
        <dbReference type="ChEBI" id="CHEBI:15378"/>
        <dbReference type="ChEBI" id="CHEBI:29950"/>
        <dbReference type="ChEBI" id="CHEBI:57685"/>
        <dbReference type="ChEBI" id="CHEBI:64716"/>
        <dbReference type="ChEBI" id="CHEBI:140658"/>
        <dbReference type="EC" id="2.5.1.145"/>
    </reaction>
</comment>
<comment type="pathway">
    <text evidence="1">Protein modification; lipoprotein biosynthesis (diacylglyceryl transfer).</text>
</comment>
<comment type="subcellular location">
    <subcellularLocation>
        <location evidence="1">Cell inner membrane</location>
        <topology evidence="1">Multi-pass membrane protein</topology>
    </subcellularLocation>
</comment>
<comment type="similarity">
    <text evidence="1">Belongs to the Lgt family.</text>
</comment>
<protein>
    <recommendedName>
        <fullName evidence="1">Phosphatidylglycerol--prolipoprotein diacylglyceryl transferase</fullName>
        <ecNumber evidence="1">2.5.1.145</ecNumber>
    </recommendedName>
</protein>
<name>LGT_PSEPG</name>
<dbReference type="EC" id="2.5.1.145" evidence="1"/>
<dbReference type="EMBL" id="CP000926">
    <property type="protein sequence ID" value="ABZ01078.1"/>
    <property type="molecule type" value="Genomic_DNA"/>
</dbReference>
<dbReference type="RefSeq" id="WP_003249027.1">
    <property type="nucleotide sequence ID" value="NC_010322.1"/>
</dbReference>
<dbReference type="SMR" id="B0KP20"/>
<dbReference type="KEGG" id="ppg:PputGB1_5195"/>
<dbReference type="eggNOG" id="COG0682">
    <property type="taxonomic scope" value="Bacteria"/>
</dbReference>
<dbReference type="HOGENOM" id="CLU_013386_1_0_6"/>
<dbReference type="UniPathway" id="UPA00664"/>
<dbReference type="Proteomes" id="UP000002157">
    <property type="component" value="Chromosome"/>
</dbReference>
<dbReference type="GO" id="GO:0005886">
    <property type="term" value="C:plasma membrane"/>
    <property type="evidence" value="ECO:0007669"/>
    <property type="project" value="UniProtKB-SubCell"/>
</dbReference>
<dbReference type="GO" id="GO:0008961">
    <property type="term" value="F:phosphatidylglycerol-prolipoprotein diacylglyceryl transferase activity"/>
    <property type="evidence" value="ECO:0007669"/>
    <property type="project" value="UniProtKB-UniRule"/>
</dbReference>
<dbReference type="GO" id="GO:0042158">
    <property type="term" value="P:lipoprotein biosynthetic process"/>
    <property type="evidence" value="ECO:0007669"/>
    <property type="project" value="UniProtKB-UniRule"/>
</dbReference>
<dbReference type="HAMAP" id="MF_01147">
    <property type="entry name" value="Lgt"/>
    <property type="match status" value="1"/>
</dbReference>
<dbReference type="InterPro" id="IPR001640">
    <property type="entry name" value="Lgt"/>
</dbReference>
<dbReference type="NCBIfam" id="TIGR00544">
    <property type="entry name" value="lgt"/>
    <property type="match status" value="1"/>
</dbReference>
<dbReference type="PANTHER" id="PTHR30589:SF0">
    <property type="entry name" value="PHOSPHATIDYLGLYCEROL--PROLIPOPROTEIN DIACYLGLYCERYL TRANSFERASE"/>
    <property type="match status" value="1"/>
</dbReference>
<dbReference type="PANTHER" id="PTHR30589">
    <property type="entry name" value="PROLIPOPROTEIN DIACYLGLYCERYL TRANSFERASE"/>
    <property type="match status" value="1"/>
</dbReference>
<dbReference type="Pfam" id="PF01790">
    <property type="entry name" value="LGT"/>
    <property type="match status" value="1"/>
</dbReference>
<dbReference type="PROSITE" id="PS01311">
    <property type="entry name" value="LGT"/>
    <property type="match status" value="1"/>
</dbReference>
<evidence type="ECO:0000255" key="1">
    <source>
        <dbReference type="HAMAP-Rule" id="MF_01147"/>
    </source>
</evidence>
<feature type="chain" id="PRO_1000085081" description="Phosphatidylglycerol--prolipoprotein diacylglyceryl transferase">
    <location>
        <begin position="1"/>
        <end position="268"/>
    </location>
</feature>
<feature type="transmembrane region" description="Helical" evidence="1">
    <location>
        <begin position="10"/>
        <end position="30"/>
    </location>
</feature>
<feature type="transmembrane region" description="Helical" evidence="1">
    <location>
        <begin position="56"/>
        <end position="76"/>
    </location>
</feature>
<feature type="transmembrane region" description="Helical" evidence="1">
    <location>
        <begin position="92"/>
        <end position="112"/>
    </location>
</feature>
<feature type="transmembrane region" description="Helical" evidence="1">
    <location>
        <begin position="120"/>
        <end position="140"/>
    </location>
</feature>
<feature type="transmembrane region" description="Helical" evidence="1">
    <location>
        <begin position="174"/>
        <end position="194"/>
    </location>
</feature>
<feature type="transmembrane region" description="Helical" evidence="1">
    <location>
        <begin position="202"/>
        <end position="222"/>
    </location>
</feature>
<feature type="transmembrane region" description="Helical" evidence="1">
    <location>
        <begin position="236"/>
        <end position="256"/>
    </location>
</feature>
<feature type="binding site" evidence="1">
    <location>
        <position position="139"/>
    </location>
    <ligand>
        <name>a 1,2-diacyl-sn-glycero-3-phospho-(1'-sn-glycerol)</name>
        <dbReference type="ChEBI" id="CHEBI:64716"/>
    </ligand>
</feature>